<gene>
    <name type="primary">qprt</name>
    <name type="ORF">DDB_G0272462</name>
</gene>
<sequence length="300" mass="33275">MEISQLLPKFKIEKIIKEWLEEDIPSFDYGGCVVGSDEKVAHLLGKQNGVFSGSIFFQEIFNQLGCKVIWFIKDGESFSMTHGPEKNKPQVLAHVIGPVRNILIGERLSLNILSRSCGITTQGYNVKKLVDGDNEQQQQQPWKGKIAGTRKTTPGFRLVEKLALLTAGLDTHRMDLSSMIMLKDNHIWACGNITNTVKNARSVGGFSLKIEVECRNQNEAIEAIEAGADIVMLDNFNPQDLQTVSTYLKQHYPHITLEASGGITSATIIQYAIPTIDIISMGNLTQGVPHIDISLKIQKQ</sequence>
<reference key="1">
    <citation type="journal article" date="2002" name="Nature">
        <title>Sequence and analysis of chromosome 2 of Dictyostelium discoideum.</title>
        <authorList>
            <person name="Gloeckner G."/>
            <person name="Eichinger L."/>
            <person name="Szafranski K."/>
            <person name="Pachebat J.A."/>
            <person name="Bankier A.T."/>
            <person name="Dear P.H."/>
            <person name="Lehmann R."/>
            <person name="Baumgart C."/>
            <person name="Parra G."/>
            <person name="Abril J.F."/>
            <person name="Guigo R."/>
            <person name="Kumpf K."/>
            <person name="Tunggal B."/>
            <person name="Cox E.C."/>
            <person name="Quail M.A."/>
            <person name="Platzer M."/>
            <person name="Rosenthal A."/>
            <person name="Noegel A.A."/>
        </authorList>
    </citation>
    <scope>NUCLEOTIDE SEQUENCE [LARGE SCALE GENOMIC DNA]</scope>
    <source>
        <strain>AX4</strain>
    </source>
</reference>
<reference key="2">
    <citation type="journal article" date="2005" name="Nature">
        <title>The genome of the social amoeba Dictyostelium discoideum.</title>
        <authorList>
            <person name="Eichinger L."/>
            <person name="Pachebat J.A."/>
            <person name="Gloeckner G."/>
            <person name="Rajandream M.A."/>
            <person name="Sucgang R."/>
            <person name="Berriman M."/>
            <person name="Song J."/>
            <person name="Olsen R."/>
            <person name="Szafranski K."/>
            <person name="Xu Q."/>
            <person name="Tunggal B."/>
            <person name="Kummerfeld S."/>
            <person name="Madera M."/>
            <person name="Konfortov B.A."/>
            <person name="Rivero F."/>
            <person name="Bankier A.T."/>
            <person name="Lehmann R."/>
            <person name="Hamlin N."/>
            <person name="Davies R."/>
            <person name="Gaudet P."/>
            <person name="Fey P."/>
            <person name="Pilcher K."/>
            <person name="Chen G."/>
            <person name="Saunders D."/>
            <person name="Sodergren E.J."/>
            <person name="Davis P."/>
            <person name="Kerhornou A."/>
            <person name="Nie X."/>
            <person name="Hall N."/>
            <person name="Anjard C."/>
            <person name="Hemphill L."/>
            <person name="Bason N."/>
            <person name="Farbrother P."/>
            <person name="Desany B."/>
            <person name="Just E."/>
            <person name="Morio T."/>
            <person name="Rost R."/>
            <person name="Churcher C.M."/>
            <person name="Cooper J."/>
            <person name="Haydock S."/>
            <person name="van Driessche N."/>
            <person name="Cronin A."/>
            <person name="Goodhead I."/>
            <person name="Muzny D.M."/>
            <person name="Mourier T."/>
            <person name="Pain A."/>
            <person name="Lu M."/>
            <person name="Harper D."/>
            <person name="Lindsay R."/>
            <person name="Hauser H."/>
            <person name="James K.D."/>
            <person name="Quiles M."/>
            <person name="Madan Babu M."/>
            <person name="Saito T."/>
            <person name="Buchrieser C."/>
            <person name="Wardroper A."/>
            <person name="Felder M."/>
            <person name="Thangavelu M."/>
            <person name="Johnson D."/>
            <person name="Knights A."/>
            <person name="Loulseged H."/>
            <person name="Mungall K.L."/>
            <person name="Oliver K."/>
            <person name="Price C."/>
            <person name="Quail M.A."/>
            <person name="Urushihara H."/>
            <person name="Hernandez J."/>
            <person name="Rabbinowitsch E."/>
            <person name="Steffen D."/>
            <person name="Sanders M."/>
            <person name="Ma J."/>
            <person name="Kohara Y."/>
            <person name="Sharp S."/>
            <person name="Simmonds M.N."/>
            <person name="Spiegler S."/>
            <person name="Tivey A."/>
            <person name="Sugano S."/>
            <person name="White B."/>
            <person name="Walker D."/>
            <person name="Woodward J.R."/>
            <person name="Winckler T."/>
            <person name="Tanaka Y."/>
            <person name="Shaulsky G."/>
            <person name="Schleicher M."/>
            <person name="Weinstock G.M."/>
            <person name="Rosenthal A."/>
            <person name="Cox E.C."/>
            <person name="Chisholm R.L."/>
            <person name="Gibbs R.A."/>
            <person name="Loomis W.F."/>
            <person name="Platzer M."/>
            <person name="Kay R.R."/>
            <person name="Williams J.G."/>
            <person name="Dear P.H."/>
            <person name="Noegel A.A."/>
            <person name="Barrell B.G."/>
            <person name="Kuspa A."/>
        </authorList>
    </citation>
    <scope>NUCLEOTIDE SEQUENCE [LARGE SCALE GENOMIC DNA]</scope>
    <source>
        <strain>AX4</strain>
    </source>
</reference>
<feature type="chain" id="PRO_0000327816" description="Nicotinate-nucleotide pyrophosphorylase [carboxylating]">
    <location>
        <begin position="1"/>
        <end position="300"/>
    </location>
</feature>
<feature type="region of interest" description="Important for hexamer formation" evidence="1">
    <location>
        <begin position="5"/>
        <end position="9"/>
    </location>
</feature>
<feature type="binding site" evidence="1">
    <location>
        <position position="107"/>
    </location>
    <ligand>
        <name>quinolinate</name>
        <dbReference type="ChEBI" id="CHEBI:29959"/>
    </ligand>
</feature>
<feature type="binding site" evidence="1">
    <location>
        <begin position="150"/>
        <end position="151"/>
    </location>
    <ligand>
        <name>quinolinate</name>
        <dbReference type="ChEBI" id="CHEBI:29959"/>
    </ligand>
</feature>
<feature type="binding site" evidence="1">
    <location>
        <begin position="172"/>
        <end position="173"/>
    </location>
    <ligand>
        <name>quinolinate</name>
        <dbReference type="ChEBI" id="CHEBI:29959"/>
    </ligand>
</feature>
<feature type="binding site" evidence="1">
    <location>
        <position position="183"/>
    </location>
    <ligand>
        <name>quinolinate</name>
        <dbReference type="ChEBI" id="CHEBI:29959"/>
    </ligand>
</feature>
<feature type="binding site" evidence="1">
    <location>
        <position position="213"/>
    </location>
    <ligand>
        <name>quinolinate</name>
        <dbReference type="ChEBI" id="CHEBI:29959"/>
    </ligand>
</feature>
<feature type="binding site" evidence="1">
    <location>
        <position position="234"/>
    </location>
    <ligand>
        <name>quinolinate</name>
        <dbReference type="ChEBI" id="CHEBI:29959"/>
    </ligand>
</feature>
<feature type="binding site" evidence="1">
    <location>
        <begin position="260"/>
        <end position="262"/>
    </location>
    <ligand>
        <name>quinolinate</name>
        <dbReference type="ChEBI" id="CHEBI:29959"/>
    </ligand>
</feature>
<feature type="binding site" evidence="1">
    <location>
        <position position="282"/>
    </location>
    <ligand>
        <name>quinolinate</name>
        <dbReference type="ChEBI" id="CHEBI:29959"/>
    </ligand>
</feature>
<protein>
    <recommendedName>
        <fullName>Nicotinate-nucleotide pyrophosphorylase [carboxylating]</fullName>
        <ecNumber>2.4.2.19</ecNumber>
    </recommendedName>
    <alternativeName>
        <fullName>Quinolinate phosphoribosyltransferase [decarboxylating]</fullName>
        <shortName>QAPRTase</shortName>
    </alternativeName>
</protein>
<comment type="function">
    <text evidence="1">Involved in the catabolism of quinolinic acid (QA).</text>
</comment>
<comment type="catalytic activity">
    <reaction evidence="1">
        <text>nicotinate beta-D-ribonucleotide + CO2 + diphosphate = quinolinate + 5-phospho-alpha-D-ribose 1-diphosphate + 2 H(+)</text>
        <dbReference type="Rhea" id="RHEA:12733"/>
        <dbReference type="ChEBI" id="CHEBI:15378"/>
        <dbReference type="ChEBI" id="CHEBI:16526"/>
        <dbReference type="ChEBI" id="CHEBI:29959"/>
        <dbReference type="ChEBI" id="CHEBI:33019"/>
        <dbReference type="ChEBI" id="CHEBI:57502"/>
        <dbReference type="ChEBI" id="CHEBI:58017"/>
        <dbReference type="EC" id="2.4.2.19"/>
    </reaction>
</comment>
<comment type="pathway">
    <text evidence="1">Cofactor biosynthesis; NAD(+) biosynthesis; nicotinate D-ribonucleotide from quinolinate: step 1/1.</text>
</comment>
<comment type="subunit">
    <text evidence="1">Hexamer formed by 3 homodimers.</text>
</comment>
<comment type="similarity">
    <text evidence="2">Belongs to the NadC/ModD family.</text>
</comment>
<keyword id="KW-0328">Glycosyltransferase</keyword>
<keyword id="KW-0662">Pyridine nucleotide biosynthesis</keyword>
<keyword id="KW-1185">Reference proteome</keyword>
<keyword id="KW-0808">Transferase</keyword>
<dbReference type="EC" id="2.4.2.19"/>
<dbReference type="EMBL" id="AAFI02000008">
    <property type="protein sequence ID" value="EAL71383.1"/>
    <property type="molecule type" value="Genomic_DNA"/>
</dbReference>
<dbReference type="RefSeq" id="XP_645294.1">
    <property type="nucleotide sequence ID" value="XM_640202.1"/>
</dbReference>
<dbReference type="SMR" id="Q75JX0"/>
<dbReference type="FunCoup" id="Q75JX0">
    <property type="interactions" value="268"/>
</dbReference>
<dbReference type="STRING" id="44689.Q75JX0"/>
<dbReference type="PaxDb" id="44689-DDB0231362"/>
<dbReference type="EnsemblProtists" id="EAL71383">
    <property type="protein sequence ID" value="EAL71383"/>
    <property type="gene ID" value="DDB_G0272462"/>
</dbReference>
<dbReference type="GeneID" id="8618460"/>
<dbReference type="KEGG" id="ddi:DDB_G0272462"/>
<dbReference type="dictyBase" id="DDB_G0272462">
    <property type="gene designation" value="qprt"/>
</dbReference>
<dbReference type="VEuPathDB" id="AmoebaDB:DDB_G0272462"/>
<dbReference type="eggNOG" id="KOG3008">
    <property type="taxonomic scope" value="Eukaryota"/>
</dbReference>
<dbReference type="HOGENOM" id="CLU_039622_1_0_1"/>
<dbReference type="InParanoid" id="Q75JX0"/>
<dbReference type="OMA" id="DIVMCDN"/>
<dbReference type="PhylomeDB" id="Q75JX0"/>
<dbReference type="Reactome" id="R-DDI-196807">
    <property type="pathway name" value="Nicotinate metabolism"/>
</dbReference>
<dbReference type="UniPathway" id="UPA00253">
    <property type="reaction ID" value="UER00331"/>
</dbReference>
<dbReference type="PRO" id="PR:Q75JX0"/>
<dbReference type="Proteomes" id="UP000002195">
    <property type="component" value="Chromosome 2"/>
</dbReference>
<dbReference type="GO" id="GO:0005737">
    <property type="term" value="C:cytoplasm"/>
    <property type="evidence" value="ECO:0000318"/>
    <property type="project" value="GO_Central"/>
</dbReference>
<dbReference type="GO" id="GO:0004514">
    <property type="term" value="F:nicotinate-nucleotide diphosphorylase (carboxylating) activity"/>
    <property type="evidence" value="ECO:0000250"/>
    <property type="project" value="dictyBase"/>
</dbReference>
<dbReference type="GO" id="GO:0009435">
    <property type="term" value="P:NAD biosynthetic process"/>
    <property type="evidence" value="ECO:0000250"/>
    <property type="project" value="dictyBase"/>
</dbReference>
<dbReference type="GO" id="GO:0034213">
    <property type="term" value="P:quinolinate catabolic process"/>
    <property type="evidence" value="ECO:0000318"/>
    <property type="project" value="GO_Central"/>
</dbReference>
<dbReference type="CDD" id="cd01572">
    <property type="entry name" value="QPRTase"/>
    <property type="match status" value="1"/>
</dbReference>
<dbReference type="FunFam" id="3.20.20.70:FF:000090">
    <property type="entry name" value="Nicotinate-nucleotide pyrophosphorylase [carboxylating]"/>
    <property type="match status" value="1"/>
</dbReference>
<dbReference type="Gene3D" id="3.20.20.70">
    <property type="entry name" value="Aldolase class I"/>
    <property type="match status" value="1"/>
</dbReference>
<dbReference type="Gene3D" id="3.90.1170.20">
    <property type="entry name" value="Quinolinate phosphoribosyl transferase, N-terminal domain"/>
    <property type="match status" value="1"/>
</dbReference>
<dbReference type="InterPro" id="IPR013785">
    <property type="entry name" value="Aldolase_TIM"/>
</dbReference>
<dbReference type="InterPro" id="IPR004393">
    <property type="entry name" value="NadC"/>
</dbReference>
<dbReference type="InterPro" id="IPR027277">
    <property type="entry name" value="NadC/ModD"/>
</dbReference>
<dbReference type="InterPro" id="IPR036068">
    <property type="entry name" value="Nicotinate_pribotase-like_C"/>
</dbReference>
<dbReference type="InterPro" id="IPR037128">
    <property type="entry name" value="Quinolinate_PRibosylTase_N_sf"/>
</dbReference>
<dbReference type="InterPro" id="IPR002638">
    <property type="entry name" value="Quinolinate_PRibosylTrfase_C"/>
</dbReference>
<dbReference type="InterPro" id="IPR022412">
    <property type="entry name" value="Quinolinate_PRibosylTrfase_N"/>
</dbReference>
<dbReference type="NCBIfam" id="TIGR00078">
    <property type="entry name" value="nadC"/>
    <property type="match status" value="1"/>
</dbReference>
<dbReference type="PANTHER" id="PTHR32179">
    <property type="entry name" value="NICOTINATE-NUCLEOTIDE PYROPHOSPHORYLASE [CARBOXYLATING]"/>
    <property type="match status" value="1"/>
</dbReference>
<dbReference type="PANTHER" id="PTHR32179:SF3">
    <property type="entry name" value="NICOTINATE-NUCLEOTIDE PYROPHOSPHORYLASE [CARBOXYLATING]"/>
    <property type="match status" value="1"/>
</dbReference>
<dbReference type="Pfam" id="PF01729">
    <property type="entry name" value="QRPTase_C"/>
    <property type="match status" value="1"/>
</dbReference>
<dbReference type="Pfam" id="PF02749">
    <property type="entry name" value="QRPTase_N"/>
    <property type="match status" value="1"/>
</dbReference>
<dbReference type="PIRSF" id="PIRSF006250">
    <property type="entry name" value="NadC_ModD"/>
    <property type="match status" value="1"/>
</dbReference>
<dbReference type="SUPFAM" id="SSF51690">
    <property type="entry name" value="Nicotinate/Quinolinate PRTase C-terminal domain-like"/>
    <property type="match status" value="1"/>
</dbReference>
<dbReference type="SUPFAM" id="SSF54675">
    <property type="entry name" value="Nicotinate/Quinolinate PRTase N-terminal domain-like"/>
    <property type="match status" value="1"/>
</dbReference>
<proteinExistence type="inferred from homology"/>
<name>NADC_DICDI</name>
<organism>
    <name type="scientific">Dictyostelium discoideum</name>
    <name type="common">Social amoeba</name>
    <dbReference type="NCBI Taxonomy" id="44689"/>
    <lineage>
        <taxon>Eukaryota</taxon>
        <taxon>Amoebozoa</taxon>
        <taxon>Evosea</taxon>
        <taxon>Eumycetozoa</taxon>
        <taxon>Dictyostelia</taxon>
        <taxon>Dictyosteliales</taxon>
        <taxon>Dictyosteliaceae</taxon>
        <taxon>Dictyostelium</taxon>
    </lineage>
</organism>
<accession>Q75JX0</accession>
<accession>Q559P0</accession>
<evidence type="ECO:0000250" key="1">
    <source>
        <dbReference type="UniProtKB" id="Q15274"/>
    </source>
</evidence>
<evidence type="ECO:0000305" key="2"/>